<comment type="function">
    <text evidence="13 14 16">Transcriptional activator or repressor which serves as a general switch factor for erythroid development (PubMed:35030251). It binds to DNA sites with the consensus sequence 5'-[AT]GATA[AG]-3' within regulatory regions of globin genes and of other genes expressed in erythroid cells. Activates the transcription of genes involved in erythroid differentiation of K562 erythroleukemia cells, including HBB, HBG1/2, ALAS2 and HMBS (PubMed:24245781).</text>
</comment>
<comment type="subunit">
    <text evidence="2 5 6 7 8 9 12 14 15 17 18">May form homodimers or heterodimers with other isoforms. Interacts (via the N-terminal zinc finger) with ZFPM1. Interacts with GFI1B. Interacts with PIAS4; the interaction enhances sumoylation and represses the transactivational activity in a sumoylation-independent manner. Interacts with LMCD1. Interacts with BRD3 (By similarity). Interacts with CREBBP; the interaction stimulates acetylation and transcriptional activity in vivo (By similarity). Interacts with EP300. Interacts with MED1, CCAR1 and CALCOCO1. Interacts with CEBPE (PubMed:26019275).</text>
</comment>
<comment type="interaction">
    <interactant intactId="EBI-3909284">
        <id>P15976</id>
    </interactant>
    <interactant intactId="EBI-1104933">
        <id>Q8N4L8</id>
        <label>CCDC24</label>
    </interactant>
    <organismsDiffer>false</organismsDiffer>
    <experiments>3</experiments>
</comment>
<comment type="interaction">
    <interactant intactId="EBI-3909284">
        <id>P15976</id>
    </interactant>
    <interactant intactId="EBI-10244131">
        <id>Q8TES7-6</id>
        <label>FBF1</label>
    </interactant>
    <organismsDiffer>false</organismsDiffer>
    <experiments>3</experiments>
</comment>
<comment type="interaction">
    <interactant intactId="EBI-3909284">
        <id>P15976</id>
    </interactant>
    <interactant intactId="EBI-725515">
        <id>O43559</id>
        <label>FRS3</label>
    </interactant>
    <organismsDiffer>false</organismsDiffer>
    <experiments>3</experiments>
</comment>
<comment type="interaction">
    <interactant intactId="EBI-3909284">
        <id>P15976</id>
    </interactant>
    <interactant intactId="EBI-5460660">
        <id>Q96MH2</id>
        <label>HEXIM2</label>
    </interactant>
    <organismsDiffer>false</organismsDiffer>
    <experiments>3</experiments>
</comment>
<comment type="interaction">
    <interactant intactId="EBI-3909284">
        <id>P15976</id>
    </interactant>
    <interactant intactId="EBI-740785">
        <id>P49639</id>
        <label>HOXA1</label>
    </interactant>
    <organismsDiffer>false</organismsDiffer>
    <experiments>3</experiments>
</comment>
<comment type="interaction">
    <interactant intactId="EBI-3909284">
        <id>P15976</id>
    </interactant>
    <interactant intactId="EBI-629985">
        <id>P08107</id>
        <label>HSPA1B</label>
    </interactant>
    <organismsDiffer>false</organismsDiffer>
    <experiments>5</experiments>
</comment>
<comment type="interaction">
    <interactant intactId="EBI-3909284">
        <id>P15976</id>
    </interactant>
    <interactant intactId="EBI-10172150">
        <id>P60370</id>
        <label>KRTAP10-5</label>
    </interactant>
    <organismsDiffer>false</organismsDiffer>
    <experiments>3</experiments>
</comment>
<comment type="interaction">
    <interactant intactId="EBI-3909284">
        <id>P15976</id>
    </interactant>
    <interactant intactId="EBI-1044640">
        <id>Q9BYQ4</id>
        <label>KRTAP9-2</label>
    </interactant>
    <organismsDiffer>false</organismsDiffer>
    <experiments>3</experiments>
</comment>
<comment type="interaction">
    <interactant intactId="EBI-3909284">
        <id>P15976</id>
    </interactant>
    <interactant intactId="EBI-394459">
        <id>Q15648</id>
        <label>MED1</label>
    </interactant>
    <organismsDiffer>false</organismsDiffer>
    <experiments>6</experiments>
</comment>
<comment type="interaction">
    <interactant intactId="EBI-3909284">
        <id>P15976</id>
    </interactant>
    <interactant intactId="EBI-2007911">
        <id>Q16236</id>
        <label>NFE2L2</label>
    </interactant>
    <organismsDiffer>false</organismsDiffer>
    <experiments>2</experiments>
</comment>
<comment type="interaction">
    <interactant intactId="EBI-3909284">
        <id>P15976</id>
    </interactant>
    <interactant intactId="EBI-1053424">
        <id>O43741</id>
        <label>PRKAB2</label>
    </interactant>
    <organismsDiffer>false</organismsDiffer>
    <experiments>3</experiments>
</comment>
<comment type="interaction">
    <interactant intactId="EBI-3909284">
        <id>P15976</id>
    </interactant>
    <interactant intactId="EBI-744267">
        <id>Q96JH8</id>
        <label>RADIL</label>
    </interactant>
    <organismsDiffer>false</organismsDiffer>
    <experiments>3</experiments>
</comment>
<comment type="interaction">
    <interactant intactId="EBI-3909284">
        <id>P15976</id>
    </interactant>
    <interactant intactId="EBI-491274">
        <id>P06400</id>
        <label>RB1</label>
    </interactant>
    <organismsDiffer>false</organismsDiffer>
    <experiments>2</experiments>
</comment>
<comment type="interaction">
    <interactant intactId="EBI-3909284">
        <id>P15976</id>
    </interactant>
    <interactant intactId="EBI-3942619">
        <id>Q8IX07</id>
        <label>ZFPM1</label>
    </interactant>
    <organismsDiffer>false</organismsDiffer>
    <experiments>2</experiments>
</comment>
<comment type="interaction">
    <interactant intactId="EBI-3909284">
        <id>P15976</id>
    </interactant>
    <interactant intactId="EBI-971782">
        <id>P13405</id>
        <label>Rb1</label>
    </interactant>
    <organismsDiffer>true</organismsDiffer>
    <experiments>2</experiments>
</comment>
<comment type="interaction">
    <interactant intactId="EBI-3909284">
        <id>P15976</id>
    </interactant>
    <interactant intactId="EBI-4394596">
        <id>O35615</id>
        <label>Zfpm1</label>
    </interactant>
    <organismsDiffer>true</organismsDiffer>
    <experiments>5</experiments>
</comment>
<comment type="interaction">
    <interactant intactId="EBI-9090198">
        <id>P15976-2</id>
    </interactant>
    <interactant intactId="EBI-742909">
        <id>Q9H6L4</id>
        <label>ARMC7</label>
    </interactant>
    <organismsDiffer>false</organismsDiffer>
    <experiments>3</experiments>
</comment>
<comment type="interaction">
    <interactant intactId="EBI-9090198">
        <id>P15976-2</id>
    </interactant>
    <interactant intactId="EBI-11954292">
        <id>Q86V38</id>
        <label>ATN1</label>
    </interactant>
    <organismsDiffer>false</organismsDiffer>
    <experiments>3</experiments>
</comment>
<comment type="interaction">
    <interactant intactId="EBI-9090198">
        <id>P15976-2</id>
    </interactant>
    <interactant intactId="EBI-10988864">
        <id>P46379-2</id>
        <label>BAG6</label>
    </interactant>
    <organismsDiffer>false</organismsDiffer>
    <experiments>3</experiments>
</comment>
<comment type="interaction">
    <interactant intactId="EBI-9090198">
        <id>P15976-2</id>
    </interactant>
    <interactant intactId="EBI-1104933">
        <id>Q8N4L8</id>
        <label>CCDC24</label>
    </interactant>
    <organismsDiffer>false</organismsDiffer>
    <experiments>3</experiments>
</comment>
<comment type="interaction">
    <interactant intactId="EBI-9090198">
        <id>P15976-2</id>
    </interactant>
    <interactant intactId="EBI-947551">
        <id>Q9H2X0</id>
        <label>CHRD</label>
    </interactant>
    <organismsDiffer>false</organismsDiffer>
    <experiments>3</experiments>
</comment>
<comment type="interaction">
    <interactant intactId="EBI-9090198">
        <id>P15976-2</id>
    </interactant>
    <interactant intactId="EBI-6875961">
        <id>P02489</id>
        <label>CRYAA</label>
    </interactant>
    <organismsDiffer>false</organismsDiffer>
    <experiments>3</experiments>
</comment>
<comment type="interaction">
    <interactant intactId="EBI-9090198">
        <id>P15976-2</id>
    </interactant>
    <interactant intactId="EBI-742953">
        <id>Q9BY27</id>
        <label>DGCR6L</label>
    </interactant>
    <organismsDiffer>false</organismsDiffer>
    <experiments>3</experiments>
</comment>
<comment type="interaction">
    <interactant intactId="EBI-9090198">
        <id>P15976-2</id>
    </interactant>
    <interactant intactId="EBI-10976677">
        <id>G5E9A7</id>
        <label>DMWD</label>
    </interactant>
    <organismsDiffer>false</organismsDiffer>
    <experiments>3</experiments>
</comment>
<comment type="interaction">
    <interactant intactId="EBI-9090198">
        <id>P15976-2</id>
    </interactant>
    <interactant intactId="EBI-2339898">
        <id>Q9NW38</id>
        <label>FANCL</label>
    </interactant>
    <organismsDiffer>false</organismsDiffer>
    <experiments>3</experiments>
</comment>
<comment type="interaction">
    <interactant intactId="EBI-9090198">
        <id>P15976-2</id>
    </interactant>
    <interactant intactId="EBI-348399">
        <id>P22607</id>
        <label>FGFR3</label>
    </interactant>
    <organismsDiffer>false</organismsDiffer>
    <experiments>3</experiments>
</comment>
<comment type="interaction">
    <interactant intactId="EBI-9090198">
        <id>P15976-2</id>
    </interactant>
    <interactant intactId="EBI-741101">
        <id>Q13643</id>
        <label>FHL3</label>
    </interactant>
    <organismsDiffer>false</organismsDiffer>
    <experiments>4</experiments>
</comment>
<comment type="interaction">
    <interactant intactId="EBI-9090198">
        <id>P15976-2</id>
    </interactant>
    <interactant intactId="EBI-725515">
        <id>O43559</id>
        <label>FRS3</label>
    </interactant>
    <organismsDiffer>false</organismsDiffer>
    <experiments>5</experiments>
</comment>
<comment type="interaction">
    <interactant intactId="EBI-9090198">
        <id>P15976-2</id>
    </interactant>
    <interactant intactId="EBI-747754">
        <id>P28799</id>
        <label>GRN</label>
    </interactant>
    <organismsDiffer>false</organismsDiffer>
    <experiments>3</experiments>
</comment>
<comment type="interaction">
    <interactant intactId="EBI-9090198">
        <id>P15976-2</id>
    </interactant>
    <interactant intactId="EBI-351506">
        <id>P06396</id>
        <label>GSN</label>
    </interactant>
    <organismsDiffer>false</organismsDiffer>
    <experiments>3</experiments>
</comment>
<comment type="interaction">
    <interactant intactId="EBI-9090198">
        <id>P15976-2</id>
    </interactant>
    <interactant intactId="EBI-740785">
        <id>P49639</id>
        <label>HOXA1</label>
    </interactant>
    <organismsDiffer>false</organismsDiffer>
    <experiments>3</experiments>
</comment>
<comment type="interaction">
    <interactant intactId="EBI-9090198">
        <id>P15976-2</id>
    </interactant>
    <interactant intactId="EBI-352682">
        <id>P04792</id>
        <label>HSPB1</label>
    </interactant>
    <organismsDiffer>false</organismsDiffer>
    <experiments>3</experiments>
</comment>
<comment type="interaction">
    <interactant intactId="EBI-9090198">
        <id>P15976-2</id>
    </interactant>
    <interactant intactId="EBI-2556193">
        <id>Q63ZY3</id>
        <label>KANK2</label>
    </interactant>
    <organismsDiffer>false</organismsDiffer>
    <experiments>3</experiments>
</comment>
<comment type="interaction">
    <interactant intactId="EBI-9090198">
        <id>P15976-2</id>
    </interactant>
    <interactant intactId="EBI-10975473">
        <id>O60333-2</id>
        <label>KIF1B</label>
    </interactant>
    <organismsDiffer>false</organismsDiffer>
    <experiments>3</experiments>
</comment>
<comment type="interaction">
    <interactant intactId="EBI-9090198">
        <id>P15976-2</id>
    </interactant>
    <interactant intactId="EBI-948266">
        <id>O14901</id>
        <label>KLF11</label>
    </interactant>
    <organismsDiffer>false</organismsDiffer>
    <experiments>3</experiments>
</comment>
<comment type="interaction">
    <interactant intactId="EBI-9090198">
        <id>P15976-2</id>
    </interactant>
    <interactant intactId="EBI-2432309">
        <id>Q92876</id>
        <label>KLK6</label>
    </interactant>
    <organismsDiffer>false</organismsDiffer>
    <experiments>3</experiments>
</comment>
<comment type="interaction">
    <interactant intactId="EBI-9090198">
        <id>P15976-2</id>
    </interactant>
    <interactant intactId="EBI-751260">
        <id>Q9BYR7</id>
        <label>KRTAP3-2</label>
    </interactant>
    <organismsDiffer>false</organismsDiffer>
    <experiments>3</experiments>
</comment>
<comment type="interaction">
    <interactant intactId="EBI-9090198">
        <id>P15976-2</id>
    </interactant>
    <interactant intactId="EBI-10302392">
        <id>Q9BYQ6</id>
        <label>KRTAP4-11</label>
    </interactant>
    <organismsDiffer>false</organismsDiffer>
    <experiments>3</experiments>
</comment>
<comment type="interaction">
    <interactant intactId="EBI-9090198">
        <id>P15976-2</id>
    </interactant>
    <interactant intactId="EBI-11993254">
        <id>Q9BYR2</id>
        <label>KRTAP4-5</label>
    </interactant>
    <organismsDiffer>false</organismsDiffer>
    <experiments>3</experiments>
</comment>
<comment type="interaction">
    <interactant intactId="EBI-9090198">
        <id>P15976-2</id>
    </interactant>
    <interactant intactId="EBI-741037">
        <id>Q9BRK4</id>
        <label>LZTS2</label>
    </interactant>
    <organismsDiffer>false</organismsDiffer>
    <experiments>3</experiments>
</comment>
<comment type="interaction">
    <interactant intactId="EBI-9090198">
        <id>P15976-2</id>
    </interactant>
    <interactant intactId="EBI-1050743">
        <id>P31153</id>
        <label>MAT2A</label>
    </interactant>
    <organismsDiffer>false</organismsDiffer>
    <experiments>3</experiments>
</comment>
<comment type="interaction">
    <interactant intactId="EBI-9090198">
        <id>P15976-2</id>
    </interactant>
    <interactant intactId="EBI-724076">
        <id>Q99750</id>
        <label>MDFI</label>
    </interactant>
    <organismsDiffer>false</organismsDiffer>
    <experiments>5</experiments>
</comment>
<comment type="interaction">
    <interactant intactId="EBI-9090198">
        <id>P15976-2</id>
    </interactant>
    <interactant intactId="EBI-2340269">
        <id>Q13064</id>
        <label>MKRN3</label>
    </interactant>
    <organismsDiffer>false</organismsDiffer>
    <experiments>3</experiments>
</comment>
<comment type="interaction">
    <interactant intactId="EBI-9090198">
        <id>P15976-2</id>
    </interactant>
    <interactant intactId="EBI-473160">
        <id>Q8N2W9</id>
        <label>PIAS4</label>
    </interactant>
    <organismsDiffer>false</organismsDiffer>
    <experiments>3</experiments>
</comment>
<comment type="interaction">
    <interactant intactId="EBI-9090198">
        <id>P15976-2</id>
    </interactant>
    <interactant intactId="EBI-748265">
        <id>P78337</id>
        <label>PITX1</label>
    </interactant>
    <organismsDiffer>false</organismsDiffer>
    <experiments>3</experiments>
</comment>
<comment type="interaction">
    <interactant intactId="EBI-9090198">
        <id>P15976-2</id>
    </interactant>
    <interactant intactId="EBI-769257">
        <id>Q9NRQ2</id>
        <label>PLSCR4</label>
    </interactant>
    <organismsDiffer>false</organismsDiffer>
    <experiments>3</experiments>
</comment>
<comment type="interaction">
    <interactant intactId="EBI-9090198">
        <id>P15976-2</id>
    </interactant>
    <interactant intactId="EBI-1053424">
        <id>O43741</id>
        <label>PRKAB2</label>
    </interactant>
    <organismsDiffer>false</organismsDiffer>
    <experiments>6</experiments>
</comment>
<comment type="interaction">
    <interactant intactId="EBI-9090198">
        <id>P15976-2</id>
    </interactant>
    <interactant intactId="EBI-749195">
        <id>P60891</id>
        <label>PRPS1</label>
    </interactant>
    <organismsDiffer>false</organismsDiffer>
    <experiments>3</experiments>
</comment>
<comment type="interaction">
    <interactant intactId="EBI-9090198">
        <id>P15976-2</id>
    </interactant>
    <interactant intactId="EBI-396669">
        <id>Q9Y3C5</id>
        <label>RNF11</label>
    </interactant>
    <organismsDiffer>false</organismsDiffer>
    <experiments>3</experiments>
</comment>
<comment type="interaction">
    <interactant intactId="EBI-9090198">
        <id>P15976-2</id>
    </interactant>
    <interactant intactId="EBI-5235340">
        <id>Q7Z699</id>
        <label>SPRED1</label>
    </interactant>
    <organismsDiffer>false</organismsDiffer>
    <experiments>3</experiments>
</comment>
<comment type="interaction">
    <interactant intactId="EBI-9090198">
        <id>P15976-2</id>
    </interactant>
    <interactant intactId="EBI-750487">
        <id>Q8WW24</id>
        <label>TEKT4</label>
    </interactant>
    <organismsDiffer>false</organismsDiffer>
    <experiments>5</experiments>
</comment>
<comment type="interaction">
    <interactant intactId="EBI-9090198">
        <id>P15976-2</id>
    </interactant>
    <interactant intactId="EBI-11741437">
        <id>Q08117-2</id>
        <label>TLE5</label>
    </interactant>
    <organismsDiffer>false</organismsDiffer>
    <experiments>5</experiments>
</comment>
<comment type="interaction">
    <interactant intactId="EBI-9090198">
        <id>P15976-2</id>
    </interactant>
    <interactant intactId="EBI-359224">
        <id>Q13077</id>
        <label>TRAF1</label>
    </interactant>
    <organismsDiffer>false</organismsDiffer>
    <experiments>3</experiments>
</comment>
<comment type="interaction">
    <interactant intactId="EBI-9090198">
        <id>P15976-2</id>
    </interactant>
    <interactant intactId="EBI-742327">
        <id>Q15654</id>
        <label>TRIP6</label>
    </interactant>
    <organismsDiffer>false</organismsDiffer>
    <experiments>4</experiments>
</comment>
<comment type="interaction">
    <interactant intactId="EBI-9090198">
        <id>P15976-2</id>
    </interactant>
    <interactant intactId="EBI-720609">
        <id>O76024</id>
        <label>WFS1</label>
    </interactant>
    <organismsDiffer>false</organismsDiffer>
    <experiments>3</experiments>
</comment>
<comment type="interaction">
    <interactant intactId="EBI-9090198">
        <id>P15976-2</id>
    </interactant>
    <interactant intactId="EBI-25900580">
        <id>Q9Y649</id>
    </interactant>
    <organismsDiffer>false</organismsDiffer>
    <experiments>3</experiments>
</comment>
<comment type="subcellular location">
    <subcellularLocation>
        <location evidence="16">Nucleus</location>
    </subcellularLocation>
</comment>
<comment type="alternative products">
    <event type="alternative splicing"/>
    <event type="alternative initiation"/>
    <isoform>
        <id>P15976-1</id>
        <name>1</name>
        <sequence type="displayed"/>
    </isoform>
    <isoform>
        <id>P15976-2</id>
        <name>2</name>
        <sequence type="described" ref="VSP_014782"/>
    </isoform>
    <isoform>
        <id>P15976-3</id>
        <name>3</name>
        <name>GATA-1s</name>
        <sequence type="described" ref="VSP_041451"/>
    </isoform>
</comment>
<comment type="tissue specificity">
    <text evidence="17">Erythrocytes.</text>
</comment>
<comment type="domain">
    <text evidence="1">The two fingers are functionally distinct and cooperate to achieve specific, stable DNA binding. The first finger is necessary only for full specificity and stability of binding, whereas the second one is required for binding (By similarity).</text>
</comment>
<comment type="PTM">
    <text evidence="1">Highly phosphorylated on serine residues. Phosphorylation on Ser-310 is enhanced on erythroid differentiation. Phosphorylation on Ser-142 promotes sumoylation on Lys-137 (By similarity).</text>
</comment>
<comment type="PTM">
    <text evidence="1">Sumoylation on Lys-137 is enhanced by phosphorylation on Ser-142 and by interaction with PIAS4. Sumoylation with SUMO1 has no effect on transcriptional activity (By similarity).</text>
</comment>
<comment type="PTM">
    <text evidence="1 18">Acetylated at 2 conserved lysine-rich motifs by CREBBP in vitro. Acetylation does not affect DNA-binding in vitro but is essential to induce erythroid differentiation and for binding chromatin in vivo (By similarity). Acetylated on Lys-233, Lys-245 Lys-246 by EP300.</text>
</comment>
<comment type="disease" evidence="5 6 7 8">
    <disease id="DI-02443">
        <name>X-linked dyserythropoietic anemia and thrombocytopenia</name>
        <acronym>XDAT</acronym>
        <description>Disorder characterized by erythrocytes with abnormal size and shape, and paucity of platelets in peripheral blood. The bone marrow contains abundant and abnormally small megakaryocytes.</description>
        <dbReference type="MIM" id="300367"/>
    </disease>
    <text>The disease is caused by variants affecting the gene represented in this entry.</text>
</comment>
<comment type="disease" evidence="9">
    <disease id="DI-02461">
        <name>Thrombocytopenia with beta-thalassemia, X-linked</name>
        <acronym>XLTT</acronym>
        <description>An unusual form of thrombocytopenia associated with beta-thalassemia. Patients have splenomegaly and petechiae, moderate thrombocytopenia, prolonged bleeding time due to platelet dysfunction, reticulocytosis and unbalanced (hemo)globin chain synthesis resembling that of beta-thalassemia minor.</description>
        <dbReference type="MIM" id="314050"/>
    </disease>
    <text>The disease is caused by variants affecting the gene represented in this entry.</text>
</comment>
<comment type="disease" evidence="11">
    <disease id="DI-03055">
        <name>Anemia without thrombocytopenia, X-linked</name>
        <acronym>XLAWT</acronym>
        <description>A form of anemia characterized by abnormal morphology of erythrocytes and granulocytes in peripheral blood, bone marrow dysplasia with hypocellularity of erythroid and granulocytic lineages, and normal or increased number of megakaryocytes. Neutropenia of a variable degree is present in affected individuals.</description>
        <dbReference type="MIM" id="300835"/>
    </disease>
    <text>The disease is caused by variants affecting the gene represented in this entry.</text>
</comment>
<comment type="disease" evidence="16">
    <disease id="DI-06440">
        <name>Anemia, congenital, non-spherocytic hemolytic, 9</name>
        <acronym>CNSHA9</acronym>
        <description>An X-linked disorder characterized by onset of mild to moderate red cell anemia soon after birth or in childhood. The anemia is associated with significantly increased adenosine deaminase activity, specifically in erythrocyte precursors.</description>
        <dbReference type="MIM" id="301083"/>
    </disease>
    <text>The disease is caused by variants affecting the gene represented in this entry.</text>
</comment>
<comment type="miscellaneous">
    <molecule>Isoform 3</molecule>
    <text evidence="20">Produced by alternative initiation at Met-84 of isoform 1.</text>
</comment>
<comment type="online information" name="Atlas of Genetics and Cytogenetics in Oncology and Haematology">
    <link uri="https://atlasgeneticsoncology.org/gene/40689/GATA1"/>
</comment>
<keyword id="KW-0002">3D-structure</keyword>
<keyword id="KW-0007">Acetylation</keyword>
<keyword id="KW-0010">Activator</keyword>
<keyword id="KW-0024">Alternative initiation</keyword>
<keyword id="KW-0025">Alternative splicing</keyword>
<keyword id="KW-0903">Direct protein sequencing</keyword>
<keyword id="KW-0225">Disease variant</keyword>
<keyword id="KW-0238">DNA-binding</keyword>
<keyword id="KW-0360">Hereditary hemolytic anemia</keyword>
<keyword id="KW-1017">Isopeptide bond</keyword>
<keyword id="KW-0479">Metal-binding</keyword>
<keyword id="KW-0539">Nucleus</keyword>
<keyword id="KW-0597">Phosphoprotein</keyword>
<keyword id="KW-1267">Proteomics identification</keyword>
<keyword id="KW-1185">Reference proteome</keyword>
<keyword id="KW-0677">Repeat</keyword>
<keyword id="KW-0678">Repressor</keyword>
<keyword id="KW-0804">Transcription</keyword>
<keyword id="KW-0805">Transcription regulation</keyword>
<keyword id="KW-0832">Ubl conjugation</keyword>
<keyword id="KW-0862">Zinc</keyword>
<keyword id="KW-0863">Zinc-finger</keyword>
<sequence>MEFPGLGSLGTSEPLPQFVDPALVSSTPESGVFFPSGPEGLDAAASSTAPSTATAAAAALAYYRDAEAYRHSPVFQVYPLLNCMEGIPGGSPYAGWAYGKTGLYPASTVCPTREDSPPQAVEDLDGKGSTSFLETLKTERLSPDLLTLGPALPSSLPVPNSAYGGPDFSSTFFSPTGSPLNSAAYSSPKLRGTLPLPPCEARECVNCGATATPLWRRDRTGHYLCNACGLYHKMNGQNRPLIRPKKRLIVSKRAGTQCTNCQTTTTTLWRRNASGDPVCNACGLYYKLHQVNRPLTMRKDGIQTRNRKASGKGKKKRGSSLGGTGAAEGPAGGFMVVAGGSGSGNCGEVASGLTLGPPGTAHLYQGLGPVVLSGPVSHLMPFPGPLLGSPTGSFPTGPMPPTTSTTVVAPLSS</sequence>
<feature type="chain" id="PRO_0000083397" description="Erythroid transcription factor">
    <location>
        <begin position="1"/>
        <end position="413"/>
    </location>
</feature>
<feature type="zinc finger region" description="GATA-type 1" evidence="3">
    <location>
        <begin position="204"/>
        <end position="228"/>
    </location>
</feature>
<feature type="zinc finger region" description="GATA-type 2" evidence="3">
    <location>
        <begin position="258"/>
        <end position="282"/>
    </location>
</feature>
<feature type="region of interest" description="Interaction with MED1 and CCAR1" evidence="14">
    <location>
        <begin position="200"/>
        <end position="330"/>
    </location>
</feature>
<feature type="region of interest" description="Required for interaction with ZFPM1">
    <location>
        <begin position="203"/>
        <end position="222"/>
    </location>
</feature>
<feature type="region of interest" description="Interaction with CALCOCO1" evidence="14">
    <location>
        <begin position="249"/>
        <end position="315"/>
    </location>
</feature>
<feature type="region of interest" description="Disordered" evidence="4">
    <location>
        <begin position="297"/>
        <end position="327"/>
    </location>
</feature>
<feature type="compositionally biased region" description="Basic residues" evidence="4">
    <location>
        <begin position="305"/>
        <end position="318"/>
    </location>
</feature>
<feature type="modified residue" description="Phosphoserine" evidence="2">
    <location>
        <position position="26"/>
    </location>
</feature>
<feature type="modified residue" description="Phosphoserine" evidence="2">
    <location>
        <position position="72"/>
    </location>
</feature>
<feature type="modified residue" description="Phosphoserine" evidence="22">
    <location>
        <position position="116"/>
    </location>
</feature>
<feature type="modified residue" description="Phosphoserine" evidence="22">
    <location>
        <position position="131"/>
    </location>
</feature>
<feature type="modified residue" description="Phosphoserine" evidence="10">
    <location>
        <position position="142"/>
    </location>
</feature>
<feature type="modified residue" description="Phosphoserine" evidence="2">
    <location>
        <position position="178"/>
    </location>
</feature>
<feature type="modified residue" description="Phosphoserine" evidence="2">
    <location>
        <position position="187"/>
    </location>
</feature>
<feature type="modified residue" description="N6-acetyllysine; by EP300" evidence="21">
    <location>
        <position position="233"/>
    </location>
</feature>
<feature type="modified residue" description="N6-acetyllysine; by EP300" evidence="21">
    <location>
        <position position="245"/>
    </location>
</feature>
<feature type="modified residue" description="N6-acetyllysine; by CREBBP" evidence="2">
    <location>
        <position position="246"/>
    </location>
</feature>
<feature type="modified residue" description="N6-acetyllysine; by EP300" evidence="21">
    <location>
        <position position="246"/>
    </location>
</feature>
<feature type="modified residue" description="N6-acetyllysine; by CREBBP" evidence="2">
    <location>
        <position position="252"/>
    </location>
</feature>
<feature type="modified residue" description="N6-acetyllysine" evidence="2">
    <location>
        <position position="308"/>
    </location>
</feature>
<feature type="modified residue" description="Phosphoserine" evidence="2">
    <location>
        <position position="310"/>
    </location>
</feature>
<feature type="modified residue" description="N6-acetyllysine; by CREBBP" evidence="2">
    <location>
        <position position="312"/>
    </location>
</feature>
<feature type="modified residue" description="N6-acetyllysine" evidence="2">
    <location>
        <position position="314"/>
    </location>
</feature>
<feature type="modified residue" description="N6-acetyllysine" evidence="2">
    <location>
        <position position="315"/>
    </location>
</feature>
<feature type="cross-link" description="Glycyl lysine isopeptide (Lys-Gly) (interchain with G-Cter in SUMO)" evidence="10">
    <location>
        <position position="137"/>
    </location>
</feature>
<feature type="splice variant" id="VSP_041451" description="In isoform 3." evidence="20">
    <location>
        <begin position="1"/>
        <end position="83"/>
    </location>
</feature>
<feature type="splice variant" id="VSP_014782" description="In isoform 2." evidence="19">
    <original>QVNRPLTMRKDGIQTRNRKASGKGKKKRGSSLGGTGAAEGPAGGFMVVAGGSGSGNCGEVASGLTLGPPGTAHLYQGLGPVVLSGPVSHLMPFPGPLLGSPTGSFPTGPMPPTTSTTVVAPLSS</original>
    <variation>HQHYCGGSAQLMRAQSMASRGGVVSFSSCSQNSGQPKSLGPRHPLA</variation>
    <location>
        <begin position="290"/>
        <end position="413"/>
    </location>
</feature>
<feature type="sequence variant" id="VAR_010115" description="In XDAT; severe impairment of ZFPM1 binding and erythroid differentiation in vitro; dbSNP:rs104894815." evidence="5">
    <original>V</original>
    <variation>M</variation>
    <location>
        <position position="205"/>
    </location>
</feature>
<feature type="sequence variant" id="VAR_012706" description="In XDAT; partially disrupts the interaction with ZFPM1; dbSNP:rs137852312." evidence="7">
    <original>G</original>
    <variation>S</variation>
    <location>
        <position position="208"/>
    </location>
</feature>
<feature type="sequence variant" id="VAR_033114" description="In XLTT; does not affect ZFPM1 binding; reduced affinity to palindromic GATA sites; supports erythroid maturation less efficiently than wild-type GATA1; dbSNP:rs104894809." evidence="9">
    <original>R</original>
    <variation>Q</variation>
    <location>
        <position position="216"/>
    </location>
</feature>
<feature type="sequence variant" id="VAR_012707" description="In XDAT; partially disrupts the interaction with ZFPM1; dbSNP:rs104894816." evidence="6">
    <original>D</original>
    <variation>G</variation>
    <location>
        <position position="218"/>
    </location>
</feature>
<feature type="sequence variant" id="VAR_033115" description="In XDAT; stronger loss of affinity than of G-218-GATA1 for ZFPM1 and disturbed GATA1 self-association; dbSNP:rs104894808." evidence="8">
    <original>D</original>
    <variation>Y</variation>
    <location>
        <position position="218"/>
    </location>
</feature>
<feature type="sequence variant" id="VAR_087448" description="In CNSHA9; altered transcriptional activity at canonical GATA1 target genes, affecting both silencing and activation of select genes necessary for effective terminal red cell production; may affect binding to specific genomic loci; partial loss of nuclear localization; dbSNP:rs1057518396." evidence="16">
    <original>R</original>
    <variation>C</variation>
    <location>
        <position position="307"/>
    </location>
</feature>
<feature type="sequence variant" id="VAR_087449" description="In CNSHA9; altered transcriptional activity at canonical GATA1 target genes, affecting both silencing and activation of select genes necessary for effective terminal red cell production; partial loss of nuclear localization; dbSNP:rs1557020556." evidence="16">
    <original>R</original>
    <variation>H</variation>
    <location>
        <position position="307"/>
    </location>
</feature>
<feature type="mutagenesis site" description="Abolishes sumoylation." evidence="10">
    <original>K</original>
    <variation>R</variation>
    <location>
        <position position="137"/>
    </location>
</feature>
<feature type="mutagenesis site" description="Loss of sumoylation." evidence="10">
    <original>S</original>
    <variation>A</variation>
    <location>
        <position position="142"/>
    </location>
</feature>
<feature type="mutagenesis site" description="Increased sumoylation in vitro." evidence="10">
    <original>S</original>
    <variation>D</variation>
    <location>
        <position position="142"/>
    </location>
</feature>
<feature type="mutagenesis site" description="Increase of dissociation rate from bound DNA." evidence="5">
    <original>C</original>
    <variation>R</variation>
    <location>
        <position position="204"/>
    </location>
</feature>
<name>GATA1_HUMAN</name>
<dbReference type="EMBL" id="X17254">
    <property type="protein sequence ID" value="CAA35120.1"/>
    <property type="molecule type" value="mRNA"/>
</dbReference>
<dbReference type="EMBL" id="M30601">
    <property type="protein sequence ID" value="AAA35885.1"/>
    <property type="molecule type" value="mRNA"/>
</dbReference>
<dbReference type="EMBL" id="AF196971">
    <property type="status" value="NOT_ANNOTATED_CDS"/>
    <property type="molecule type" value="Genomic_DNA"/>
</dbReference>
<dbReference type="EMBL" id="BC009797">
    <property type="protein sequence ID" value="AAH09797.1"/>
    <property type="molecule type" value="mRNA"/>
</dbReference>
<dbReference type="CCDS" id="CCDS14305.1">
    <molecule id="P15976-1"/>
</dbReference>
<dbReference type="PIR" id="A34888">
    <property type="entry name" value="A34888"/>
</dbReference>
<dbReference type="RefSeq" id="NP_002040.1">
    <molecule id="P15976-1"/>
    <property type="nucleotide sequence ID" value="NM_002049.4"/>
</dbReference>
<dbReference type="PDB" id="6G0Q">
    <property type="method" value="X-ray"/>
    <property type="resolution" value="1.40 A"/>
    <property type="chains" value="B=309-319"/>
</dbReference>
<dbReference type="PDBsum" id="6G0Q"/>
<dbReference type="SMR" id="P15976"/>
<dbReference type="BioGRID" id="108893">
    <property type="interactions" value="148"/>
</dbReference>
<dbReference type="DIP" id="DIP-41431N"/>
<dbReference type="FunCoup" id="P15976">
    <property type="interactions" value="283"/>
</dbReference>
<dbReference type="IntAct" id="P15976">
    <property type="interactions" value="143"/>
</dbReference>
<dbReference type="MINT" id="P15976"/>
<dbReference type="STRING" id="9606.ENSP00000365858"/>
<dbReference type="iPTMnet" id="P15976"/>
<dbReference type="PhosphoSitePlus" id="P15976"/>
<dbReference type="BioMuta" id="GATA1"/>
<dbReference type="DMDM" id="120956"/>
<dbReference type="jPOST" id="P15976"/>
<dbReference type="MassIVE" id="P15976"/>
<dbReference type="PaxDb" id="9606-ENSP00000365858"/>
<dbReference type="PeptideAtlas" id="P15976"/>
<dbReference type="ProteomicsDB" id="53260">
    <molecule id="P15976-1"/>
</dbReference>
<dbReference type="ProteomicsDB" id="53261">
    <molecule id="P15976-2"/>
</dbReference>
<dbReference type="ProteomicsDB" id="53262">
    <molecule id="P15976-3"/>
</dbReference>
<dbReference type="Pumba" id="P15976"/>
<dbReference type="Antibodypedia" id="372">
    <property type="antibodies" value="977 antibodies from 47 providers"/>
</dbReference>
<dbReference type="DNASU" id="2623"/>
<dbReference type="Ensembl" id="ENST00000376670.9">
    <molecule id="P15976-1"/>
    <property type="protein sequence ID" value="ENSP00000365858.3"/>
    <property type="gene ID" value="ENSG00000102145.16"/>
</dbReference>
<dbReference type="Ensembl" id="ENST00000651144.2">
    <molecule id="P15976-3"/>
    <property type="protein sequence ID" value="ENSP00000498550.1"/>
    <property type="gene ID" value="ENSG00000102145.16"/>
</dbReference>
<dbReference type="GeneID" id="2623"/>
<dbReference type="KEGG" id="hsa:2623"/>
<dbReference type="MANE-Select" id="ENST00000376670.9">
    <property type="protein sequence ID" value="ENSP00000365858.3"/>
    <property type="RefSeq nucleotide sequence ID" value="NM_002049.4"/>
    <property type="RefSeq protein sequence ID" value="NP_002040.1"/>
</dbReference>
<dbReference type="UCSC" id="uc004dkq.5">
    <molecule id="P15976-1"/>
    <property type="organism name" value="human"/>
</dbReference>
<dbReference type="AGR" id="HGNC:4170"/>
<dbReference type="CTD" id="2623"/>
<dbReference type="DisGeNET" id="2623"/>
<dbReference type="GeneCards" id="GATA1"/>
<dbReference type="GeneReviews" id="GATA1"/>
<dbReference type="HGNC" id="HGNC:4170">
    <property type="gene designation" value="GATA1"/>
</dbReference>
<dbReference type="HPA" id="ENSG00000102145">
    <property type="expression patterns" value="Tissue enriched (bone)"/>
</dbReference>
<dbReference type="MalaCards" id="GATA1"/>
<dbReference type="MIM" id="300367">
    <property type="type" value="phenotype"/>
</dbReference>
<dbReference type="MIM" id="300835">
    <property type="type" value="phenotype"/>
</dbReference>
<dbReference type="MIM" id="301083">
    <property type="type" value="phenotype"/>
</dbReference>
<dbReference type="MIM" id="305371">
    <property type="type" value="gene"/>
</dbReference>
<dbReference type="MIM" id="314050">
    <property type="type" value="phenotype"/>
</dbReference>
<dbReference type="neXtProt" id="NX_P15976"/>
<dbReference type="OpenTargets" id="ENSG00000102145"/>
<dbReference type="Orphanet" id="86849">
    <property type="disease" value="Acute basophilic leukemia"/>
</dbReference>
<dbReference type="Orphanet" id="99887">
    <property type="disease" value="Acute megakaryoblastic leukemia in children with Down syndrome"/>
</dbReference>
<dbReference type="Orphanet" id="231393">
    <property type="disease" value="Beta-thalassemia-X-linked thrombocytopenia syndrome"/>
</dbReference>
<dbReference type="Orphanet" id="79277">
    <property type="disease" value="Congenital erythropoietic porphyria"/>
</dbReference>
<dbReference type="Orphanet" id="124">
    <property type="disease" value="Diamond-Blackfan anemia"/>
</dbReference>
<dbReference type="Orphanet" id="67044">
    <property type="disease" value="Thrombocytopenia with congenital dyserythropoietic anemia"/>
</dbReference>
<dbReference type="Orphanet" id="420611">
    <property type="disease" value="Transient myeloproliferative syndrome"/>
</dbReference>
<dbReference type="Orphanet" id="363727">
    <property type="disease" value="X-linked dyserythropoietic anemia with abnormal platelets and neutropenia"/>
</dbReference>
<dbReference type="PharmGKB" id="PA28584"/>
<dbReference type="VEuPathDB" id="HostDB:ENSG00000102145"/>
<dbReference type="eggNOG" id="KOG1601">
    <property type="taxonomic scope" value="Eukaryota"/>
</dbReference>
<dbReference type="GeneTree" id="ENSGT00940000161156"/>
<dbReference type="HOGENOM" id="CLU_027524_1_1_1"/>
<dbReference type="InParanoid" id="P15976"/>
<dbReference type="OMA" id="YSKTGLY"/>
<dbReference type="OrthoDB" id="515401at2759"/>
<dbReference type="PAN-GO" id="P15976">
    <property type="GO annotations" value="5 GO annotations based on evolutionary models"/>
</dbReference>
<dbReference type="PhylomeDB" id="P15976"/>
<dbReference type="TreeFam" id="TF315391"/>
<dbReference type="PathwayCommons" id="P15976"/>
<dbReference type="Reactome" id="R-HSA-8936459">
    <property type="pathway name" value="RUNX1 regulates genes involved in megakaryocyte differentiation and platelet function"/>
</dbReference>
<dbReference type="Reactome" id="R-HSA-8939236">
    <property type="pathway name" value="RUNX1 regulates transcription of genes involved in differentiation of HSCs"/>
</dbReference>
<dbReference type="Reactome" id="R-HSA-983231">
    <property type="pathway name" value="Factors involved in megakaryocyte development and platelet production"/>
</dbReference>
<dbReference type="SignaLink" id="P15976"/>
<dbReference type="SIGNOR" id="P15976"/>
<dbReference type="BioGRID-ORCS" id="2623">
    <property type="hits" value="39 hits in 810 CRISPR screens"/>
</dbReference>
<dbReference type="CD-CODE" id="1A18FFC4">
    <property type="entry name" value="Paraspeckle"/>
</dbReference>
<dbReference type="ChiTaRS" id="GATA1">
    <property type="organism name" value="human"/>
</dbReference>
<dbReference type="GeneWiki" id="GATA1"/>
<dbReference type="GenomeRNAi" id="2623"/>
<dbReference type="Pharos" id="P15976">
    <property type="development level" value="Tbio"/>
</dbReference>
<dbReference type="PRO" id="PR:P15976"/>
<dbReference type="Proteomes" id="UP000005640">
    <property type="component" value="Chromosome X"/>
</dbReference>
<dbReference type="RNAct" id="P15976">
    <property type="molecule type" value="protein"/>
</dbReference>
<dbReference type="Bgee" id="ENSG00000102145">
    <property type="expression patterns" value="Expressed in trabecular bone tissue and 93 other cell types or tissues"/>
</dbReference>
<dbReference type="ExpressionAtlas" id="P15976">
    <property type="expression patterns" value="baseline and differential"/>
</dbReference>
<dbReference type="GO" id="GO:0000785">
    <property type="term" value="C:chromatin"/>
    <property type="evidence" value="ECO:0000247"/>
    <property type="project" value="NTNU_SB"/>
</dbReference>
<dbReference type="GO" id="GO:0005654">
    <property type="term" value="C:nucleoplasm"/>
    <property type="evidence" value="ECO:0000314"/>
    <property type="project" value="HPA"/>
</dbReference>
<dbReference type="GO" id="GO:0005634">
    <property type="term" value="C:nucleus"/>
    <property type="evidence" value="ECO:0000314"/>
    <property type="project" value="UniProtKB"/>
</dbReference>
<dbReference type="GO" id="GO:0032993">
    <property type="term" value="C:protein-DNA complex"/>
    <property type="evidence" value="ECO:0000314"/>
    <property type="project" value="UniProtKB"/>
</dbReference>
<dbReference type="GO" id="GO:0005667">
    <property type="term" value="C:transcription regulator complex"/>
    <property type="evidence" value="ECO:0000314"/>
    <property type="project" value="BHF-UCL"/>
</dbReference>
<dbReference type="GO" id="GO:0017053">
    <property type="term" value="C:transcription repressor complex"/>
    <property type="evidence" value="ECO:0000314"/>
    <property type="project" value="BHF-UCL"/>
</dbReference>
<dbReference type="GO" id="GO:0070742">
    <property type="term" value="F:C2H2 zinc finger domain binding"/>
    <property type="evidence" value="ECO:0000353"/>
    <property type="project" value="BHF-UCL"/>
</dbReference>
<dbReference type="GO" id="GO:0031490">
    <property type="term" value="F:chromatin DNA binding"/>
    <property type="evidence" value="ECO:0000314"/>
    <property type="project" value="UniProtKB"/>
</dbReference>
<dbReference type="GO" id="GO:0003677">
    <property type="term" value="F:DNA binding"/>
    <property type="evidence" value="ECO:0000314"/>
    <property type="project" value="UniProtKB"/>
</dbReference>
<dbReference type="GO" id="GO:0001228">
    <property type="term" value="F:DNA-binding transcription activator activity, RNA polymerase II-specific"/>
    <property type="evidence" value="ECO:0000314"/>
    <property type="project" value="BHF-UCL"/>
</dbReference>
<dbReference type="GO" id="GO:0003700">
    <property type="term" value="F:DNA-binding transcription factor activity"/>
    <property type="evidence" value="ECO:0000314"/>
    <property type="project" value="BHF-UCL"/>
</dbReference>
<dbReference type="GO" id="GO:0000981">
    <property type="term" value="F:DNA-binding transcription factor activity, RNA polymerase II-specific"/>
    <property type="evidence" value="ECO:0000247"/>
    <property type="project" value="NTNU_SB"/>
</dbReference>
<dbReference type="GO" id="GO:0002039">
    <property type="term" value="F:p53 binding"/>
    <property type="evidence" value="ECO:0007669"/>
    <property type="project" value="Ensembl"/>
</dbReference>
<dbReference type="GO" id="GO:0000978">
    <property type="term" value="F:RNA polymerase II cis-regulatory region sequence-specific DNA binding"/>
    <property type="evidence" value="ECO:0000314"/>
    <property type="project" value="UniProtKB"/>
</dbReference>
<dbReference type="GO" id="GO:0000977">
    <property type="term" value="F:RNA polymerase II transcription regulatory region sequence-specific DNA binding"/>
    <property type="evidence" value="ECO:0000314"/>
    <property type="project" value="BHF-UCL"/>
</dbReference>
<dbReference type="GO" id="GO:0061629">
    <property type="term" value="F:RNA polymerase II-specific DNA-binding transcription factor binding"/>
    <property type="evidence" value="ECO:0000353"/>
    <property type="project" value="BHF-UCL"/>
</dbReference>
<dbReference type="GO" id="GO:0043565">
    <property type="term" value="F:sequence-specific DNA binding"/>
    <property type="evidence" value="ECO:0000315"/>
    <property type="project" value="BHF-UCL"/>
</dbReference>
<dbReference type="GO" id="GO:1990837">
    <property type="term" value="F:sequence-specific double-stranded DNA binding"/>
    <property type="evidence" value="ECO:0000314"/>
    <property type="project" value="ARUK-UCL"/>
</dbReference>
<dbReference type="GO" id="GO:0000976">
    <property type="term" value="F:transcription cis-regulatory region binding"/>
    <property type="evidence" value="ECO:0000315"/>
    <property type="project" value="BHF-UCL"/>
</dbReference>
<dbReference type="GO" id="GO:0001223">
    <property type="term" value="F:transcription coactivator binding"/>
    <property type="evidence" value="ECO:0007669"/>
    <property type="project" value="Ensembl"/>
</dbReference>
<dbReference type="GO" id="GO:0001221">
    <property type="term" value="F:transcription coregulator binding"/>
    <property type="evidence" value="ECO:0000353"/>
    <property type="project" value="BHF-UCL"/>
</dbReference>
<dbReference type="GO" id="GO:0008270">
    <property type="term" value="F:zinc ion binding"/>
    <property type="evidence" value="ECO:0007669"/>
    <property type="project" value="UniProtKB-KW"/>
</dbReference>
<dbReference type="GO" id="GO:0031100">
    <property type="term" value="P:animal organ regeneration"/>
    <property type="evidence" value="ECO:0007669"/>
    <property type="project" value="Ensembl"/>
</dbReference>
<dbReference type="GO" id="GO:0030221">
    <property type="term" value="P:basophil differentiation"/>
    <property type="evidence" value="ECO:0000270"/>
    <property type="project" value="BHF-UCL"/>
</dbReference>
<dbReference type="GO" id="GO:0030282">
    <property type="term" value="P:bone mineralization"/>
    <property type="evidence" value="ECO:0007669"/>
    <property type="project" value="Ensembl"/>
</dbReference>
<dbReference type="GO" id="GO:0045165">
    <property type="term" value="P:cell fate commitment"/>
    <property type="evidence" value="ECO:0000318"/>
    <property type="project" value="GO_Central"/>
</dbReference>
<dbReference type="GO" id="GO:0007267">
    <property type="term" value="P:cell-cell signaling"/>
    <property type="evidence" value="ECO:0007669"/>
    <property type="project" value="Ensembl"/>
</dbReference>
<dbReference type="GO" id="GO:0071320">
    <property type="term" value="P:cellular response to cAMP"/>
    <property type="evidence" value="ECO:0007669"/>
    <property type="project" value="Ensembl"/>
</dbReference>
<dbReference type="GO" id="GO:0071372">
    <property type="term" value="P:cellular response to follicle-stimulating hormone stimulus"/>
    <property type="evidence" value="ECO:0007669"/>
    <property type="project" value="Ensembl"/>
</dbReference>
<dbReference type="GO" id="GO:0071222">
    <property type="term" value="P:cellular response to lipopolysaccharide"/>
    <property type="evidence" value="ECO:0007669"/>
    <property type="project" value="Ensembl"/>
</dbReference>
<dbReference type="GO" id="GO:0097028">
    <property type="term" value="P:dendritic cell differentiation"/>
    <property type="evidence" value="ECO:0007669"/>
    <property type="project" value="Ensembl"/>
</dbReference>
<dbReference type="GO" id="GO:0030222">
    <property type="term" value="P:eosinophil differentiation"/>
    <property type="evidence" value="ECO:0000270"/>
    <property type="project" value="BHF-UCL"/>
</dbReference>
<dbReference type="GO" id="GO:0035854">
    <property type="term" value="P:eosinophil fate commitment"/>
    <property type="evidence" value="ECO:0000314"/>
    <property type="project" value="BHF-UCL"/>
</dbReference>
<dbReference type="GO" id="GO:0048821">
    <property type="term" value="P:erythrocyte development"/>
    <property type="evidence" value="ECO:0000315"/>
    <property type="project" value="BHF-UCL"/>
</dbReference>
<dbReference type="GO" id="GO:0030218">
    <property type="term" value="P:erythrocyte differentiation"/>
    <property type="evidence" value="ECO:0000270"/>
    <property type="project" value="BHF-UCL"/>
</dbReference>
<dbReference type="GO" id="GO:0048873">
    <property type="term" value="P:homeostasis of number of cells within a tissue"/>
    <property type="evidence" value="ECO:0007669"/>
    <property type="project" value="Ensembl"/>
</dbReference>
<dbReference type="GO" id="GO:0001701">
    <property type="term" value="P:in utero embryonic development"/>
    <property type="evidence" value="ECO:0007669"/>
    <property type="project" value="Ensembl"/>
</dbReference>
<dbReference type="GO" id="GO:0008584">
    <property type="term" value="P:male gonad development"/>
    <property type="evidence" value="ECO:0000315"/>
    <property type="project" value="BHF-UCL"/>
</dbReference>
<dbReference type="GO" id="GO:0030219">
    <property type="term" value="P:megakaryocyte differentiation"/>
    <property type="evidence" value="ECO:0000315"/>
    <property type="project" value="BHF-UCL"/>
</dbReference>
<dbReference type="GO" id="GO:0033028">
    <property type="term" value="P:myeloid cell apoptotic process"/>
    <property type="evidence" value="ECO:0007669"/>
    <property type="project" value="Ensembl"/>
</dbReference>
<dbReference type="GO" id="GO:0043066">
    <property type="term" value="P:negative regulation of apoptotic process"/>
    <property type="evidence" value="ECO:0000315"/>
    <property type="project" value="UniProtKB"/>
</dbReference>
<dbReference type="GO" id="GO:0030502">
    <property type="term" value="P:negative regulation of bone mineralization"/>
    <property type="evidence" value="ECO:0007669"/>
    <property type="project" value="Ensembl"/>
</dbReference>
<dbReference type="GO" id="GO:0008285">
    <property type="term" value="P:negative regulation of cell population proliferation"/>
    <property type="evidence" value="ECO:0007669"/>
    <property type="project" value="Ensembl"/>
</dbReference>
<dbReference type="GO" id="GO:2001240">
    <property type="term" value="P:negative regulation of extrinsic apoptotic signaling pathway in absence of ligand"/>
    <property type="evidence" value="ECO:0000315"/>
    <property type="project" value="BHF-UCL"/>
</dbReference>
<dbReference type="GO" id="GO:0033033">
    <property type="term" value="P:negative regulation of myeloid cell apoptotic process"/>
    <property type="evidence" value="ECO:0007669"/>
    <property type="project" value="Ensembl"/>
</dbReference>
<dbReference type="GO" id="GO:0000122">
    <property type="term" value="P:negative regulation of transcription by RNA polymerase II"/>
    <property type="evidence" value="ECO:0000314"/>
    <property type="project" value="UniProtKB"/>
</dbReference>
<dbReference type="GO" id="GO:2000678">
    <property type="term" value="P:negative regulation of transcription regulatory region DNA binding"/>
    <property type="evidence" value="ECO:0000314"/>
    <property type="project" value="BHF-UCL"/>
</dbReference>
<dbReference type="GO" id="GO:0033687">
    <property type="term" value="P:osteoblast proliferation"/>
    <property type="evidence" value="ECO:0007669"/>
    <property type="project" value="Ensembl"/>
</dbReference>
<dbReference type="GO" id="GO:0070527">
    <property type="term" value="P:platelet aggregation"/>
    <property type="evidence" value="ECO:0000315"/>
    <property type="project" value="BHF-UCL"/>
</dbReference>
<dbReference type="GO" id="GO:0030220">
    <property type="term" value="P:platelet formation"/>
    <property type="evidence" value="ECO:0000315"/>
    <property type="project" value="BHF-UCL"/>
</dbReference>
<dbReference type="GO" id="GO:0007204">
    <property type="term" value="P:positive regulation of cytosolic calcium ion concentration"/>
    <property type="evidence" value="ECO:0007669"/>
    <property type="project" value="Ensembl"/>
</dbReference>
<dbReference type="GO" id="GO:0045893">
    <property type="term" value="P:positive regulation of DNA-templated transcription"/>
    <property type="evidence" value="ECO:0000314"/>
    <property type="project" value="UniProtKB"/>
</dbReference>
<dbReference type="GO" id="GO:0045648">
    <property type="term" value="P:positive regulation of erythrocyte differentiation"/>
    <property type="evidence" value="ECO:0000315"/>
    <property type="project" value="UniProtKB"/>
</dbReference>
<dbReference type="GO" id="GO:0043306">
    <property type="term" value="P:positive regulation of mast cell degranulation"/>
    <property type="evidence" value="ECO:0007669"/>
    <property type="project" value="Ensembl"/>
</dbReference>
<dbReference type="GO" id="GO:0033690">
    <property type="term" value="P:positive regulation of osteoblast proliferation"/>
    <property type="evidence" value="ECO:0007669"/>
    <property type="project" value="Ensembl"/>
</dbReference>
<dbReference type="GO" id="GO:0045944">
    <property type="term" value="P:positive regulation of transcription by RNA polymerase II"/>
    <property type="evidence" value="ECO:0000314"/>
    <property type="project" value="BHF-UCL"/>
</dbReference>
<dbReference type="GO" id="GO:0060319">
    <property type="term" value="P:primitive erythrocyte differentiation"/>
    <property type="evidence" value="ECO:0007669"/>
    <property type="project" value="Ensembl"/>
</dbReference>
<dbReference type="GO" id="GO:0010724">
    <property type="term" value="P:regulation of definitive erythrocyte differentiation"/>
    <property type="evidence" value="ECO:0000314"/>
    <property type="project" value="BHF-UCL"/>
</dbReference>
<dbReference type="GO" id="GO:0010559">
    <property type="term" value="P:regulation of glycoprotein biosynthetic process"/>
    <property type="evidence" value="ECO:0000315"/>
    <property type="project" value="BHF-UCL"/>
</dbReference>
<dbReference type="GO" id="GO:0010725">
    <property type="term" value="P:regulation of primitive erythrocyte differentiation"/>
    <property type="evidence" value="ECO:0007669"/>
    <property type="project" value="Ensembl"/>
</dbReference>
<dbReference type="GO" id="GO:0060009">
    <property type="term" value="P:Sertoli cell development"/>
    <property type="evidence" value="ECO:0007669"/>
    <property type="project" value="Ensembl"/>
</dbReference>
<dbReference type="GO" id="GO:0006366">
    <property type="term" value="P:transcription by RNA polymerase II"/>
    <property type="evidence" value="ECO:0007669"/>
    <property type="project" value="Ensembl"/>
</dbReference>
<dbReference type="CDD" id="cd00202">
    <property type="entry name" value="ZnF_GATA"/>
    <property type="match status" value="2"/>
</dbReference>
<dbReference type="FunFam" id="3.30.50.10:FF:000001">
    <property type="entry name" value="GATA transcription factor (GATAd)"/>
    <property type="match status" value="1"/>
</dbReference>
<dbReference type="FunFam" id="3.30.50.10:FF:000032">
    <property type="entry name" value="Transcription factor GATA-3"/>
    <property type="match status" value="1"/>
</dbReference>
<dbReference type="Gene3D" id="3.30.50.10">
    <property type="entry name" value="Erythroid Transcription Factor GATA-1, subunit A"/>
    <property type="match status" value="2"/>
</dbReference>
<dbReference type="InterPro" id="IPR039355">
    <property type="entry name" value="Transcription_factor_GATA"/>
</dbReference>
<dbReference type="InterPro" id="IPR000679">
    <property type="entry name" value="Znf_GATA"/>
</dbReference>
<dbReference type="InterPro" id="IPR013088">
    <property type="entry name" value="Znf_NHR/GATA"/>
</dbReference>
<dbReference type="PANTHER" id="PTHR10071:SF190">
    <property type="entry name" value="ERYTHROID TRANSCRIPTION FACTOR"/>
    <property type="match status" value="1"/>
</dbReference>
<dbReference type="PANTHER" id="PTHR10071">
    <property type="entry name" value="TRANSCRIPTION FACTOR GATA FAMILY MEMBER"/>
    <property type="match status" value="1"/>
</dbReference>
<dbReference type="Pfam" id="PF00320">
    <property type="entry name" value="GATA"/>
    <property type="match status" value="2"/>
</dbReference>
<dbReference type="PRINTS" id="PR00619">
    <property type="entry name" value="GATAZNFINGER"/>
</dbReference>
<dbReference type="SMART" id="SM00401">
    <property type="entry name" value="ZnF_GATA"/>
    <property type="match status" value="2"/>
</dbReference>
<dbReference type="SUPFAM" id="SSF57716">
    <property type="entry name" value="Glucocorticoid receptor-like (DNA-binding domain)"/>
    <property type="match status" value="2"/>
</dbReference>
<dbReference type="PROSITE" id="PS00344">
    <property type="entry name" value="GATA_ZN_FINGER_1"/>
    <property type="match status" value="2"/>
</dbReference>
<dbReference type="PROSITE" id="PS50114">
    <property type="entry name" value="GATA_ZN_FINGER_2"/>
    <property type="match status" value="2"/>
</dbReference>
<organism>
    <name type="scientific">Homo sapiens</name>
    <name type="common">Human</name>
    <dbReference type="NCBI Taxonomy" id="9606"/>
    <lineage>
        <taxon>Eukaryota</taxon>
        <taxon>Metazoa</taxon>
        <taxon>Chordata</taxon>
        <taxon>Craniata</taxon>
        <taxon>Vertebrata</taxon>
        <taxon>Euteleostomi</taxon>
        <taxon>Mammalia</taxon>
        <taxon>Eutheria</taxon>
        <taxon>Euarchontoglires</taxon>
        <taxon>Primates</taxon>
        <taxon>Haplorrhini</taxon>
        <taxon>Catarrhini</taxon>
        <taxon>Hominidae</taxon>
        <taxon>Homo</taxon>
    </lineage>
</organism>
<protein>
    <recommendedName>
        <fullName>Erythroid transcription factor</fullName>
    </recommendedName>
    <alternativeName>
        <fullName>Eryf1</fullName>
    </alternativeName>
    <alternativeName>
        <fullName>GATA-binding factor 1</fullName>
        <shortName>GATA-1</shortName>
        <shortName>GF-1</shortName>
    </alternativeName>
    <alternativeName>
        <fullName>NF-E1 DNA-binding protein</fullName>
    </alternativeName>
</protein>
<reference key="1">
    <citation type="journal article" date="1990" name="Nature">
        <title>Structure and evolution of a human erythroid transcription factor.</title>
        <authorList>
            <person name="Trainor C.D."/>
            <person name="Evans T."/>
            <person name="Felsenfeld G."/>
            <person name="Boguski M.S."/>
        </authorList>
    </citation>
    <scope>NUCLEOTIDE SEQUENCE [MRNA] (ISOFORM 1)</scope>
    <source>
        <tissue>Bone marrow</tissue>
    </source>
</reference>
<reference key="2">
    <citation type="journal article" date="1990" name="Proc. Natl. Acad. Sci. U.S.A.">
        <title>The major human erythroid DNA-binding protein (GF-1): primary sequence and localization of the gene to the X chromosome.</title>
        <authorList>
            <person name="Zon L.I."/>
            <person name="Tsai S.-F."/>
            <person name="Burgess S."/>
            <person name="Matsudaira P."/>
            <person name="Bruns G.A.P."/>
            <person name="Orkin S.H."/>
        </authorList>
    </citation>
    <scope>NUCLEOTIDE SEQUENCE [MRNA] (ISOFORM 1)</scope>
    <scope>PARTIAL PROTEIN SEQUENCE</scope>
    <source>
        <tissue>Erythrocyte</tissue>
    </source>
</reference>
<reference key="3">
    <citation type="journal article" date="2005" name="Nature">
        <title>The DNA sequence of the human X chromosome.</title>
        <authorList>
            <person name="Ross M.T."/>
            <person name="Grafham D.V."/>
            <person name="Coffey A.J."/>
            <person name="Scherer S."/>
            <person name="McLay K."/>
            <person name="Muzny D."/>
            <person name="Platzer M."/>
            <person name="Howell G.R."/>
            <person name="Burrows C."/>
            <person name="Bird C.P."/>
            <person name="Frankish A."/>
            <person name="Lovell F.L."/>
            <person name="Howe K.L."/>
            <person name="Ashurst J.L."/>
            <person name="Fulton R.S."/>
            <person name="Sudbrak R."/>
            <person name="Wen G."/>
            <person name="Jones M.C."/>
            <person name="Hurles M.E."/>
            <person name="Andrews T.D."/>
            <person name="Scott C.E."/>
            <person name="Searle S."/>
            <person name="Ramser J."/>
            <person name="Whittaker A."/>
            <person name="Deadman R."/>
            <person name="Carter N.P."/>
            <person name="Hunt S.E."/>
            <person name="Chen R."/>
            <person name="Cree A."/>
            <person name="Gunaratne P."/>
            <person name="Havlak P."/>
            <person name="Hodgson A."/>
            <person name="Metzker M.L."/>
            <person name="Richards S."/>
            <person name="Scott G."/>
            <person name="Steffen D."/>
            <person name="Sodergren E."/>
            <person name="Wheeler D.A."/>
            <person name="Worley K.C."/>
            <person name="Ainscough R."/>
            <person name="Ambrose K.D."/>
            <person name="Ansari-Lari M.A."/>
            <person name="Aradhya S."/>
            <person name="Ashwell R.I."/>
            <person name="Babbage A.K."/>
            <person name="Bagguley C.L."/>
            <person name="Ballabio A."/>
            <person name="Banerjee R."/>
            <person name="Barker G.E."/>
            <person name="Barlow K.F."/>
            <person name="Barrett I.P."/>
            <person name="Bates K.N."/>
            <person name="Beare D.M."/>
            <person name="Beasley H."/>
            <person name="Beasley O."/>
            <person name="Beck A."/>
            <person name="Bethel G."/>
            <person name="Blechschmidt K."/>
            <person name="Brady N."/>
            <person name="Bray-Allen S."/>
            <person name="Bridgeman A.M."/>
            <person name="Brown A.J."/>
            <person name="Brown M.J."/>
            <person name="Bonnin D."/>
            <person name="Bruford E.A."/>
            <person name="Buhay C."/>
            <person name="Burch P."/>
            <person name="Burford D."/>
            <person name="Burgess J."/>
            <person name="Burrill W."/>
            <person name="Burton J."/>
            <person name="Bye J.M."/>
            <person name="Carder C."/>
            <person name="Carrel L."/>
            <person name="Chako J."/>
            <person name="Chapman J.C."/>
            <person name="Chavez D."/>
            <person name="Chen E."/>
            <person name="Chen G."/>
            <person name="Chen Y."/>
            <person name="Chen Z."/>
            <person name="Chinault C."/>
            <person name="Ciccodicola A."/>
            <person name="Clark S.Y."/>
            <person name="Clarke G."/>
            <person name="Clee C.M."/>
            <person name="Clegg S."/>
            <person name="Clerc-Blankenburg K."/>
            <person name="Clifford K."/>
            <person name="Cobley V."/>
            <person name="Cole C.G."/>
            <person name="Conquer J.S."/>
            <person name="Corby N."/>
            <person name="Connor R.E."/>
            <person name="David R."/>
            <person name="Davies J."/>
            <person name="Davis C."/>
            <person name="Davis J."/>
            <person name="Delgado O."/>
            <person name="Deshazo D."/>
            <person name="Dhami P."/>
            <person name="Ding Y."/>
            <person name="Dinh H."/>
            <person name="Dodsworth S."/>
            <person name="Draper H."/>
            <person name="Dugan-Rocha S."/>
            <person name="Dunham A."/>
            <person name="Dunn M."/>
            <person name="Durbin K.J."/>
            <person name="Dutta I."/>
            <person name="Eades T."/>
            <person name="Ellwood M."/>
            <person name="Emery-Cohen A."/>
            <person name="Errington H."/>
            <person name="Evans K.L."/>
            <person name="Faulkner L."/>
            <person name="Francis F."/>
            <person name="Frankland J."/>
            <person name="Fraser A.E."/>
            <person name="Galgoczy P."/>
            <person name="Gilbert J."/>
            <person name="Gill R."/>
            <person name="Gloeckner G."/>
            <person name="Gregory S.G."/>
            <person name="Gribble S."/>
            <person name="Griffiths C."/>
            <person name="Grocock R."/>
            <person name="Gu Y."/>
            <person name="Gwilliam R."/>
            <person name="Hamilton C."/>
            <person name="Hart E.A."/>
            <person name="Hawes A."/>
            <person name="Heath P.D."/>
            <person name="Heitmann K."/>
            <person name="Hennig S."/>
            <person name="Hernandez J."/>
            <person name="Hinzmann B."/>
            <person name="Ho S."/>
            <person name="Hoffs M."/>
            <person name="Howden P.J."/>
            <person name="Huckle E.J."/>
            <person name="Hume J."/>
            <person name="Hunt P.J."/>
            <person name="Hunt A.R."/>
            <person name="Isherwood J."/>
            <person name="Jacob L."/>
            <person name="Johnson D."/>
            <person name="Jones S."/>
            <person name="de Jong P.J."/>
            <person name="Joseph S.S."/>
            <person name="Keenan S."/>
            <person name="Kelly S."/>
            <person name="Kershaw J.K."/>
            <person name="Khan Z."/>
            <person name="Kioschis P."/>
            <person name="Klages S."/>
            <person name="Knights A.J."/>
            <person name="Kosiura A."/>
            <person name="Kovar-Smith C."/>
            <person name="Laird G.K."/>
            <person name="Langford C."/>
            <person name="Lawlor S."/>
            <person name="Leversha M."/>
            <person name="Lewis L."/>
            <person name="Liu W."/>
            <person name="Lloyd C."/>
            <person name="Lloyd D.M."/>
            <person name="Loulseged H."/>
            <person name="Loveland J.E."/>
            <person name="Lovell J.D."/>
            <person name="Lozado R."/>
            <person name="Lu J."/>
            <person name="Lyne R."/>
            <person name="Ma J."/>
            <person name="Maheshwari M."/>
            <person name="Matthews L.H."/>
            <person name="McDowall J."/>
            <person name="McLaren S."/>
            <person name="McMurray A."/>
            <person name="Meidl P."/>
            <person name="Meitinger T."/>
            <person name="Milne S."/>
            <person name="Miner G."/>
            <person name="Mistry S.L."/>
            <person name="Morgan M."/>
            <person name="Morris S."/>
            <person name="Mueller I."/>
            <person name="Mullikin J.C."/>
            <person name="Nguyen N."/>
            <person name="Nordsiek G."/>
            <person name="Nyakatura G."/>
            <person name="O'dell C.N."/>
            <person name="Okwuonu G."/>
            <person name="Palmer S."/>
            <person name="Pandian R."/>
            <person name="Parker D."/>
            <person name="Parrish J."/>
            <person name="Pasternak S."/>
            <person name="Patel D."/>
            <person name="Pearce A.V."/>
            <person name="Pearson D.M."/>
            <person name="Pelan S.E."/>
            <person name="Perez L."/>
            <person name="Porter K.M."/>
            <person name="Ramsey Y."/>
            <person name="Reichwald K."/>
            <person name="Rhodes S."/>
            <person name="Ridler K.A."/>
            <person name="Schlessinger D."/>
            <person name="Schueler M.G."/>
            <person name="Sehra H.K."/>
            <person name="Shaw-Smith C."/>
            <person name="Shen H."/>
            <person name="Sheridan E.M."/>
            <person name="Shownkeen R."/>
            <person name="Skuce C.D."/>
            <person name="Smith M.L."/>
            <person name="Sotheran E.C."/>
            <person name="Steingruber H.E."/>
            <person name="Steward C.A."/>
            <person name="Storey R."/>
            <person name="Swann R.M."/>
            <person name="Swarbreck D."/>
            <person name="Tabor P.E."/>
            <person name="Taudien S."/>
            <person name="Taylor T."/>
            <person name="Teague B."/>
            <person name="Thomas K."/>
            <person name="Thorpe A."/>
            <person name="Timms K."/>
            <person name="Tracey A."/>
            <person name="Trevanion S."/>
            <person name="Tromans A.C."/>
            <person name="d'Urso M."/>
            <person name="Verduzco D."/>
            <person name="Villasana D."/>
            <person name="Waldron L."/>
            <person name="Wall M."/>
            <person name="Wang Q."/>
            <person name="Warren J."/>
            <person name="Warry G.L."/>
            <person name="Wei X."/>
            <person name="West A."/>
            <person name="Whitehead S.L."/>
            <person name="Whiteley M.N."/>
            <person name="Wilkinson J.E."/>
            <person name="Willey D.L."/>
            <person name="Williams G."/>
            <person name="Williams L."/>
            <person name="Williamson A."/>
            <person name="Williamson H."/>
            <person name="Wilming L."/>
            <person name="Woodmansey R.L."/>
            <person name="Wray P.W."/>
            <person name="Yen J."/>
            <person name="Zhang J."/>
            <person name="Zhou J."/>
            <person name="Zoghbi H."/>
            <person name="Zorilla S."/>
            <person name="Buck D."/>
            <person name="Reinhardt R."/>
            <person name="Poustka A."/>
            <person name="Rosenthal A."/>
            <person name="Lehrach H."/>
            <person name="Meindl A."/>
            <person name="Minx P.J."/>
            <person name="Hillier L.W."/>
            <person name="Willard H.F."/>
            <person name="Wilson R.K."/>
            <person name="Waterston R.H."/>
            <person name="Rice C.M."/>
            <person name="Vaudin M."/>
            <person name="Coulson A."/>
            <person name="Nelson D.L."/>
            <person name="Weinstock G."/>
            <person name="Sulston J.E."/>
            <person name="Durbin R.M."/>
            <person name="Hubbard T."/>
            <person name="Gibbs R.A."/>
            <person name="Beck S."/>
            <person name="Rogers J."/>
            <person name="Bentley D.R."/>
        </authorList>
    </citation>
    <scope>NUCLEOTIDE SEQUENCE [LARGE SCALE GENOMIC DNA]</scope>
</reference>
<reference key="4">
    <citation type="journal article" date="2004" name="Genome Res.">
        <title>The status, quality, and expansion of the NIH full-length cDNA project: the Mammalian Gene Collection (MGC).</title>
        <authorList>
            <consortium name="The MGC Project Team"/>
        </authorList>
    </citation>
    <scope>NUCLEOTIDE SEQUENCE [LARGE SCALE MRNA] (ISOFORM 2)</scope>
    <source>
        <tissue>Bone marrow</tissue>
    </source>
</reference>
<reference key="5">
    <citation type="journal article" date="1995" name="Proc. Natl. Acad. Sci. U.S.A.">
        <title>Alternative translation initiation site usage results in two functionally distinct forms of the GATA-1 transcription factor.</title>
        <authorList>
            <person name="Calligaris R."/>
            <person name="Bottardi S."/>
            <person name="Cogoi S."/>
            <person name="Apezteguia I."/>
            <person name="Santoro C."/>
        </authorList>
    </citation>
    <scope>ALTERNATIVE INITIATION (ISOFORM 3)</scope>
    <scope>SUBUNIT</scope>
    <scope>TISSUE SPECIFICITY</scope>
</reference>
<reference key="6">
    <citation type="journal article" date="1998" name="Nature">
        <title>Regulation of activity of the transcription factor GATA-1 by acetylation.</title>
        <authorList>
            <person name="Boyes J."/>
            <person name="Byfield P."/>
            <person name="Nakatani Y."/>
            <person name="Ogryzko V."/>
        </authorList>
    </citation>
    <scope>INTERACTION WITH EP300</scope>
    <scope>ACETYLATION AT LYS-233; LYS-245 AND LYS-246</scope>
</reference>
<reference key="7">
    <citation type="journal article" date="2006" name="Nat. Genet.">
        <title>An inherited mutation leading to production of only the short isoform of GATA-1 is associated with impaired erythropoiesis.</title>
        <authorList>
            <person name="Hollanda L.M."/>
            <person name="Lima C.S."/>
            <person name="Cunha A.F."/>
            <person name="Albuquerque D.M."/>
            <person name="Vassallo J."/>
            <person name="Ozelo M.C."/>
            <person name="Joazeiro P.P."/>
            <person name="Saad S.T."/>
            <person name="Costa F.F."/>
        </authorList>
    </citation>
    <scope>INVOLVEMENT IN XLAWT</scope>
</reference>
<reference key="8">
    <citation type="journal article" date="2006" name="Proc. Natl. Acad. Sci. U.S.A.">
        <title>PDSM, a motif for phosphorylation-dependent SUMO modification.</title>
        <authorList>
            <person name="Hietakangas V."/>
            <person name="Anckar J."/>
            <person name="Blomster H.A."/>
            <person name="Fujimoto M."/>
            <person name="Palvimo J.J."/>
            <person name="Nakai A."/>
            <person name="Sistonen L."/>
        </authorList>
    </citation>
    <scope>SUMOYLATION AT LYS-137</scope>
    <scope>PHOSPHORYLATION AT SER-142</scope>
    <scope>MUTAGENESIS OF LYS-137 AND SER-142</scope>
</reference>
<reference key="9">
    <citation type="journal article" date="2007" name="Mol. Cell. Biol.">
        <title>GATA-1 and Gfi-1B interplay to regulate Bcl-xL transcription.</title>
        <authorList>
            <person name="Kuo Y.-Y."/>
            <person name="Chang Z.-F."/>
        </authorList>
    </citation>
    <scope>INTERACTION WITH GFI1B</scope>
</reference>
<reference key="10">
    <citation type="journal article" date="2012" name="PLoS ONE">
        <title>Knockdown of ZNF268, which is transcriptionally downregulated by GATA-1, promotes proliferation of K562 cells.</title>
        <authorList>
            <person name="Zeng Y."/>
            <person name="Wang W."/>
            <person name="Ma J."/>
            <person name="Wang X."/>
            <person name="Guo M."/>
            <person name="Li W."/>
        </authorList>
    </citation>
    <scope>FUNCTION</scope>
    <scope>DNA-BINDING</scope>
</reference>
<reference key="11">
    <citation type="journal article" date="2013" name="J. Proteome Res.">
        <title>Toward a comprehensive characterization of a human cancer cell phosphoproteome.</title>
        <authorList>
            <person name="Zhou H."/>
            <person name="Di Palma S."/>
            <person name="Preisinger C."/>
            <person name="Peng M."/>
            <person name="Polat A.N."/>
            <person name="Heck A.J."/>
            <person name="Mohammed S."/>
        </authorList>
    </citation>
    <scope>PHOSPHORYLATION [LARGE SCALE ANALYSIS] AT SER-116 AND SER-131</scope>
    <scope>IDENTIFICATION BY MASS SPECTROMETRY [LARGE SCALE ANALYSIS]</scope>
    <source>
        <tissue>Erythroleukemia</tissue>
    </source>
</reference>
<reference key="12">
    <citation type="journal article" date="2014" name="Genes Cells">
        <title>CCAR1/CoCoA pair-mediated recruitment of the Mediator defines a novel pathway for GATA1 function.</title>
        <authorList>
            <person name="Mizuta S."/>
            <person name="Minami T."/>
            <person name="Fujita H."/>
            <person name="Kaminaga C."/>
            <person name="Matsui K."/>
            <person name="Ishino R."/>
            <person name="Fujita A."/>
            <person name="Oda K."/>
            <person name="Kawai A."/>
            <person name="Hasegawa N."/>
            <person name="Urahama N."/>
            <person name="Roeder R.G."/>
            <person name="Ito M."/>
        </authorList>
    </citation>
    <scope>FUNCTION</scope>
    <scope>INTERACTION WITH MED1; CCAR1 AND CALCOCO1</scope>
</reference>
<reference key="13">
    <citation type="journal article" date="2015" name="J. Immunol.">
        <title>A novel in-frame deletion in the leucine zipper domain of C/EBPepsilon leads to neutrophil-specific granule deficiency.</title>
        <authorList>
            <person name="Wada T."/>
            <person name="Akagi T."/>
            <person name="Muraoka M."/>
            <person name="Toma T."/>
            <person name="Kaji K."/>
            <person name="Agematsu K."/>
            <person name="Koeffler H.P."/>
            <person name="Yokota T."/>
            <person name="Yachie A."/>
        </authorList>
    </citation>
    <scope>INTERACTION WITH CEBPE</scope>
</reference>
<reference key="14">
    <citation type="journal article" date="2000" name="Nat. Genet.">
        <title>Familial dyserythropoietic anaemia and thrombocytopenia due to an inherited mutation in GATA1.</title>
        <authorList>
            <person name="Nichols K.E."/>
            <person name="Crispino J.D."/>
            <person name="Poncz M."/>
            <person name="White J.G."/>
            <person name="Orkin S.H."/>
            <person name="Maris J.M."/>
            <person name="Weiss M.J."/>
        </authorList>
    </citation>
    <scope>VARIANT XDAT MET-205</scope>
    <scope>INTERACTION WITH ZFPM1</scope>
    <scope>CHARACTERIZATION OF VARIANT XDAT MET-205</scope>
    <scope>MUTAGENESIS OF CYS-204</scope>
    <source>
        <tissue>Peripheral blood</tissue>
    </source>
</reference>
<reference key="15">
    <citation type="journal article" date="2001" name="Blood">
        <title>Platelet characteristics in patients with X-linked macrothrombocytopenia because of a novel GATA1 mutation.</title>
        <authorList>
            <person name="Freson K."/>
            <person name="Devriendt K."/>
            <person name="Matthijs G."/>
            <person name="Van Hoof A."/>
            <person name="De Vos R."/>
            <person name="Thys C."/>
            <person name="Minner K."/>
            <person name="Hoylaerts M.F."/>
            <person name="Vermylen J."/>
            <person name="Van Geet C."/>
        </authorList>
    </citation>
    <scope>VARIANT XDAT GLY-218</scope>
    <scope>INTERACTION WITH ZFPM1</scope>
    <scope>CHARACTERIZATION OF VARIANT XDAT GLY-218</scope>
</reference>
<reference key="16">
    <citation type="journal article" date="2001" name="Blood">
        <title>X-linked thrombocytopenia caused by a novel mutation of GATA-1.</title>
        <authorList>
            <person name="Mehaffey M.G."/>
            <person name="Newton A.L."/>
            <person name="Gandhi M.J."/>
            <person name="Crossley M."/>
            <person name="Drachman J.G."/>
        </authorList>
    </citation>
    <scope>VARIANT XDAT SER-208</scope>
    <scope>INTERACTION WITH ZFPM1</scope>
    <scope>CHARACTERIZATION OF VARIANT XDAT SER-208</scope>
</reference>
<reference key="17">
    <citation type="journal article" date="2002" name="Blood">
        <title>X-linked thrombocytopenia with thalassemia from a mutation in the amino finger of GATA-1 affecting DNA binding rather than FOG-1 interaction.</title>
        <authorList>
            <person name="Yu C."/>
            <person name="Niakan K.K."/>
            <person name="Matsushita M."/>
            <person name="Stamatoyannopoulos G."/>
            <person name="Orkin S.H."/>
            <person name="Raskind W.H."/>
        </authorList>
    </citation>
    <scope>VARIANT XLTT GLN-216</scope>
    <scope>INTERACTION WITH ZFPM1</scope>
    <scope>CHARACTERIZATION OF VARIANT XLTT GLN-216</scope>
</reference>
<reference key="18">
    <citation type="journal article" date="2002" name="Hum. Mol. Genet.">
        <title>Different substitutions at residue D218 of the X-linked transcription factor GATA1 lead to altered clinical severity of macrothrombocytopenia and anemia and are associated with variable skewed X inactivation.</title>
        <authorList>
            <person name="Freson K."/>
            <person name="Matthijs G."/>
            <person name="Thys C."/>
            <person name="Marieen P."/>
            <person name="Hoylaerts M.F."/>
            <person name="Vermylen J."/>
            <person name="Van Geet C."/>
        </authorList>
    </citation>
    <scope>VARIANT XDAT TYR-218</scope>
    <scope>INTERACTION WITH ZFPM1</scope>
    <scope>CHARACTERIZATION OF VARIANT XDAT TYR-218</scope>
</reference>
<reference key="19">
    <citation type="journal article" date="2022" name="Blood">
        <title>Congenital anemia reveals distinct targeting mechanisms for master transcription factor GATA1.</title>
        <authorList>
            <person name="Ludwig L.S."/>
            <person name="Lareau C.A."/>
            <person name="Bao E.L."/>
            <person name="Liu N."/>
            <person name="Utsugisawa T."/>
            <person name="Tseng A.M."/>
            <person name="Myers S.A."/>
            <person name="Verboon J.M."/>
            <person name="Ulirsch J.C."/>
            <person name="Luo W."/>
            <person name="Muus C."/>
            <person name="Fiorini C."/>
            <person name="Olive M.E."/>
            <person name="Vockley C.M."/>
            <person name="Munschauer M."/>
            <person name="Hunter A."/>
            <person name="Ogura H."/>
            <person name="Yamamoto T."/>
            <person name="Inada H."/>
            <person name="Nakagawa S."/>
            <person name="Ohzono S."/>
            <person name="Subramanian V."/>
            <person name="Chiarle R."/>
            <person name="Glader B."/>
            <person name="Carr S.A."/>
            <person name="Aryee M.J."/>
            <person name="Kundaje A."/>
            <person name="Orkin S.H."/>
            <person name="Regev A."/>
            <person name="McCavit T.L."/>
            <person name="Kanno H."/>
            <person name="Sankaran V.G."/>
        </authorList>
    </citation>
    <scope>INVOLVEMENT IN CNSHA9</scope>
    <scope>VARIANTS CNSHA9 CYS-307 AND HIS-307</scope>
    <scope>CHARACTERIZATION OF VARIANTS CNSHA9 CYS-307 AND HIS-307</scope>
    <scope>FUNCTION</scope>
    <scope>SUBCELLULAR LOCATION</scope>
</reference>
<proteinExistence type="evidence at protein level"/>
<accession>P15976</accession>
<accession>Q96GB8</accession>
<gene>
    <name type="primary">GATA1</name>
    <name type="synonym">ERYF1</name>
    <name type="synonym">GF1</name>
</gene>
<evidence type="ECO:0000250" key="1"/>
<evidence type="ECO:0000250" key="2">
    <source>
        <dbReference type="UniProtKB" id="P17679"/>
    </source>
</evidence>
<evidence type="ECO:0000255" key="3">
    <source>
        <dbReference type="PROSITE-ProRule" id="PRU00094"/>
    </source>
</evidence>
<evidence type="ECO:0000256" key="4">
    <source>
        <dbReference type="SAM" id="MobiDB-lite"/>
    </source>
</evidence>
<evidence type="ECO:0000269" key="5">
    <source>
    </source>
</evidence>
<evidence type="ECO:0000269" key="6">
    <source>
    </source>
</evidence>
<evidence type="ECO:0000269" key="7">
    <source>
    </source>
</evidence>
<evidence type="ECO:0000269" key="8">
    <source>
    </source>
</evidence>
<evidence type="ECO:0000269" key="9">
    <source>
    </source>
</evidence>
<evidence type="ECO:0000269" key="10">
    <source>
    </source>
</evidence>
<evidence type="ECO:0000269" key="11">
    <source>
    </source>
</evidence>
<evidence type="ECO:0000269" key="12">
    <source>
    </source>
</evidence>
<evidence type="ECO:0000269" key="13">
    <source>
    </source>
</evidence>
<evidence type="ECO:0000269" key="14">
    <source>
    </source>
</evidence>
<evidence type="ECO:0000269" key="15">
    <source>
    </source>
</evidence>
<evidence type="ECO:0000269" key="16">
    <source>
    </source>
</evidence>
<evidence type="ECO:0000269" key="17">
    <source>
    </source>
</evidence>
<evidence type="ECO:0000269" key="18">
    <source>
    </source>
</evidence>
<evidence type="ECO:0000303" key="19">
    <source>
    </source>
</evidence>
<evidence type="ECO:0000305" key="20"/>
<evidence type="ECO:0000305" key="21">
    <source>
    </source>
</evidence>
<evidence type="ECO:0007744" key="22">
    <source>
    </source>
</evidence>